<reference key="1">
    <citation type="journal article" date="1999" name="J. Mol. Biol.">
        <title>Plant cyclotides: a unique family of cyclic and knotted proteins that defines the cyclic cystine knot structural motif.</title>
        <authorList>
            <person name="Craik D.J."/>
            <person name="Daly N.L."/>
            <person name="Bond T."/>
            <person name="Waine C."/>
        </authorList>
    </citation>
    <scope>PROTEIN SEQUENCE</scope>
</reference>
<reference key="2">
    <citation type="journal article" date="2006" name="Biochem. J.">
        <title>A novel suite of cyclotides from Viola odorata: sequence variation and the implications for structure, function and stability.</title>
        <authorList>
            <person name="Ireland D.C."/>
            <person name="Colgrave M.L."/>
            <person name="Craik D.J."/>
        </authorList>
    </citation>
    <scope>PROTEIN SEQUENCE</scope>
    <scope>MASS SPECTROMETRY</scope>
</reference>
<proteinExistence type="evidence at protein level"/>
<dbReference type="SMR" id="P58441"/>
<dbReference type="GO" id="GO:0006952">
    <property type="term" value="P:defense response"/>
    <property type="evidence" value="ECO:0000250"/>
    <property type="project" value="UniProtKB"/>
</dbReference>
<dbReference type="InterPro" id="IPR005535">
    <property type="entry name" value="Cyclotide"/>
</dbReference>
<dbReference type="InterPro" id="IPR012323">
    <property type="entry name" value="Cyclotide_bracelet_CS"/>
</dbReference>
<dbReference type="InterPro" id="IPR036146">
    <property type="entry name" value="Cyclotide_sf"/>
</dbReference>
<dbReference type="Pfam" id="PF03784">
    <property type="entry name" value="Cyclotide"/>
    <property type="match status" value="1"/>
</dbReference>
<dbReference type="PIRSF" id="PIRSF037891">
    <property type="entry name" value="Cycloviolacin"/>
    <property type="match status" value="1"/>
</dbReference>
<dbReference type="SUPFAM" id="SSF57038">
    <property type="entry name" value="Cyclotides"/>
    <property type="match status" value="1"/>
</dbReference>
<dbReference type="PROSITE" id="PS51052">
    <property type="entry name" value="CYCLOTIDE"/>
    <property type="match status" value="1"/>
</dbReference>
<dbReference type="PROSITE" id="PS60008">
    <property type="entry name" value="CYCLOTIDE_BRACELET"/>
    <property type="match status" value="1"/>
</dbReference>
<accession>P58441</accession>
<feature type="peptide" id="PRO_0000043616" description="Cycloviolacin-O9">
    <location>
        <begin position="1"/>
        <end position="30"/>
    </location>
</feature>
<feature type="disulfide bond">
    <location>
        <begin position="4"/>
        <end position="20"/>
    </location>
</feature>
<feature type="disulfide bond">
    <location>
        <begin position="8"/>
        <end position="22"/>
    </location>
</feature>
<feature type="disulfide bond">
    <location>
        <begin position="13"/>
        <end position="27"/>
    </location>
</feature>
<feature type="cross-link" description="Cyclopeptide (Gly-Asn)">
    <location>
        <begin position="1"/>
        <end position="30"/>
    </location>
</feature>
<evidence type="ECO:0000255" key="1">
    <source>
        <dbReference type="PROSITE-ProRule" id="PRU00395"/>
    </source>
</evidence>
<evidence type="ECO:0000269" key="2">
    <source>
    </source>
</evidence>
<evidence type="ECO:0000305" key="3"/>
<sequence>GIPCGESCVWIPCLTSAVGCSCKSKVCYRN</sequence>
<protein>
    <recommendedName>
        <fullName>Cycloviolacin-O9</fullName>
    </recommendedName>
</protein>
<name>CYO9_VIOOD</name>
<keyword id="KW-0903">Direct protein sequencing</keyword>
<keyword id="KW-1015">Disulfide bond</keyword>
<keyword id="KW-0960">Knottin</keyword>
<keyword id="KW-0611">Plant defense</keyword>
<organism>
    <name type="scientific">Viola odorata</name>
    <name type="common">Sweet violet</name>
    <dbReference type="NCBI Taxonomy" id="97441"/>
    <lineage>
        <taxon>Eukaryota</taxon>
        <taxon>Viridiplantae</taxon>
        <taxon>Streptophyta</taxon>
        <taxon>Embryophyta</taxon>
        <taxon>Tracheophyta</taxon>
        <taxon>Spermatophyta</taxon>
        <taxon>Magnoliopsida</taxon>
        <taxon>eudicotyledons</taxon>
        <taxon>Gunneridae</taxon>
        <taxon>Pentapetalae</taxon>
        <taxon>rosids</taxon>
        <taxon>fabids</taxon>
        <taxon>Malpighiales</taxon>
        <taxon>Violaceae</taxon>
        <taxon>Viola</taxon>
        <taxon>Viola subgen. Viola</taxon>
        <taxon>Viola sect. Viola</taxon>
        <taxon>Viola subsect. Viola</taxon>
    </lineage>
</organism>
<comment type="function">
    <text>Probably participates in a plant defense mechanism.</text>
</comment>
<comment type="domain">
    <text>The presence of a 'disulfide through disulfide knot' structurally defines this protein as a knottin.</text>
</comment>
<comment type="PTM">
    <text>This is a cyclic peptide.</text>
</comment>
<comment type="mass spectrometry"/>
<comment type="similarity">
    <text evidence="1">Belongs to the cyclotide family. Bracelet subfamily.</text>
</comment>
<comment type="caution">
    <text evidence="3">This peptide is cyclic. The start position was chosen by similarity to OAK1 (kalata-B1) for which the DNA sequence is known.</text>
</comment>